<keyword id="KW-0963">Cytoplasm</keyword>
<keyword id="KW-0378">Hydrolase</keyword>
<keyword id="KW-0479">Metal-binding</keyword>
<keyword id="KW-0533">Nickel</keyword>
<feature type="chain" id="PRO_1000070658" description="Urease subunit alpha">
    <location>
        <begin position="1"/>
        <end position="572"/>
    </location>
</feature>
<feature type="domain" description="Urease" evidence="1">
    <location>
        <begin position="136"/>
        <end position="572"/>
    </location>
</feature>
<feature type="active site" description="Proton donor" evidence="1">
    <location>
        <position position="327"/>
    </location>
</feature>
<feature type="binding site" evidence="1">
    <location>
        <position position="141"/>
    </location>
    <ligand>
        <name>Ni(2+)</name>
        <dbReference type="ChEBI" id="CHEBI:49786"/>
        <label>1</label>
    </ligand>
</feature>
<feature type="binding site" evidence="1">
    <location>
        <position position="143"/>
    </location>
    <ligand>
        <name>Ni(2+)</name>
        <dbReference type="ChEBI" id="CHEBI:49786"/>
        <label>1</label>
    </ligand>
</feature>
<feature type="binding site" description="via carbamate group" evidence="1">
    <location>
        <position position="224"/>
    </location>
    <ligand>
        <name>Ni(2+)</name>
        <dbReference type="ChEBI" id="CHEBI:49786"/>
        <label>1</label>
    </ligand>
</feature>
<feature type="binding site" description="via carbamate group" evidence="1">
    <location>
        <position position="224"/>
    </location>
    <ligand>
        <name>Ni(2+)</name>
        <dbReference type="ChEBI" id="CHEBI:49786"/>
        <label>2</label>
    </ligand>
</feature>
<feature type="binding site" evidence="1">
    <location>
        <position position="226"/>
    </location>
    <ligand>
        <name>substrate</name>
    </ligand>
</feature>
<feature type="binding site" evidence="1">
    <location>
        <position position="253"/>
    </location>
    <ligand>
        <name>Ni(2+)</name>
        <dbReference type="ChEBI" id="CHEBI:49786"/>
        <label>2</label>
    </ligand>
</feature>
<feature type="binding site" evidence="1">
    <location>
        <position position="279"/>
    </location>
    <ligand>
        <name>Ni(2+)</name>
        <dbReference type="ChEBI" id="CHEBI:49786"/>
        <label>2</label>
    </ligand>
</feature>
<feature type="binding site" evidence="1">
    <location>
        <position position="367"/>
    </location>
    <ligand>
        <name>Ni(2+)</name>
        <dbReference type="ChEBI" id="CHEBI:49786"/>
        <label>1</label>
    </ligand>
</feature>
<feature type="modified residue" description="N6-carboxylysine" evidence="1">
    <location>
        <position position="224"/>
    </location>
</feature>
<evidence type="ECO:0000255" key="1">
    <source>
        <dbReference type="HAMAP-Rule" id="MF_01953"/>
    </source>
</evidence>
<sequence>MALTISRAQYVATYGPTVGDKVRLGDTNLWATIEQDLLTKGDECKFGGGKSVRDGMAQSGTATRDNPNVLDFVITNVMIIDAKLGIIKADIGIRDGRIVGIGQAGNPDTMDNVTPNMIIGASTEVHNGAHLIATAGGIDTHIHFICPQQAQHAIESGVTTLIGGGTGPADGTHATTCTPGAWYMERMFQAAEALPVNVGFFGKGNCSTLDPLREQIEAGALGLKIHEDWGATPAVIDSALKVADEMDIQVAIHTDTLNESGFLEDTMKAIDGRVIHTFHTEGAGGGHAPDIIKAAMYSNVLPASTNPTRPFTKNTIDEHLDMLMVCHHLDKRVPEDVAFADSRIRPETIAAEDILHDMGVFSIMSSDSQAMGRIGEVVIRTWQTADKMKMQRGELGNEGNDNFRIKRYIAKYTINPAIAHGIAEHIGSLEVGKIADIVLWKPMFFGVKPEVVIKKGFISYAKMGDPNASIPTPQPVFYRPMYGAQGLATAQTAVFFVSQAAEKADIREKFGLHKETIAVKGCRNVGKKDLVHNDVTPNITVDAERYEVRVDGELITCEPVDSVPLGQRYFLF</sequence>
<proteinExistence type="inferred from homology"/>
<name>URE1_HAEIE</name>
<organism>
    <name type="scientific">Haemophilus influenzae (strain PittEE)</name>
    <dbReference type="NCBI Taxonomy" id="374930"/>
    <lineage>
        <taxon>Bacteria</taxon>
        <taxon>Pseudomonadati</taxon>
        <taxon>Pseudomonadota</taxon>
        <taxon>Gammaproteobacteria</taxon>
        <taxon>Pasteurellales</taxon>
        <taxon>Pasteurellaceae</taxon>
        <taxon>Haemophilus</taxon>
    </lineage>
</organism>
<gene>
    <name evidence="1" type="primary">ureC</name>
    <name type="ordered locus">CGSHiEE_00295</name>
</gene>
<accession>A5U9V6</accession>
<dbReference type="EC" id="3.5.1.5" evidence="1"/>
<dbReference type="EMBL" id="CP000671">
    <property type="protein sequence ID" value="ABQ97557.1"/>
    <property type="molecule type" value="Genomic_DNA"/>
</dbReference>
<dbReference type="SMR" id="A5U9V6"/>
<dbReference type="MEROPS" id="M38.982"/>
<dbReference type="KEGG" id="hip:CGSHiEE_00295"/>
<dbReference type="HOGENOM" id="CLU_000980_0_0_6"/>
<dbReference type="UniPathway" id="UPA00258">
    <property type="reaction ID" value="UER00370"/>
</dbReference>
<dbReference type="GO" id="GO:0005737">
    <property type="term" value="C:cytoplasm"/>
    <property type="evidence" value="ECO:0007669"/>
    <property type="project" value="UniProtKB-SubCell"/>
</dbReference>
<dbReference type="GO" id="GO:0016151">
    <property type="term" value="F:nickel cation binding"/>
    <property type="evidence" value="ECO:0007669"/>
    <property type="project" value="UniProtKB-UniRule"/>
</dbReference>
<dbReference type="GO" id="GO:0009039">
    <property type="term" value="F:urease activity"/>
    <property type="evidence" value="ECO:0007669"/>
    <property type="project" value="UniProtKB-UniRule"/>
</dbReference>
<dbReference type="GO" id="GO:0043419">
    <property type="term" value="P:urea catabolic process"/>
    <property type="evidence" value="ECO:0007669"/>
    <property type="project" value="UniProtKB-UniRule"/>
</dbReference>
<dbReference type="CDD" id="cd00375">
    <property type="entry name" value="Urease_alpha"/>
    <property type="match status" value="1"/>
</dbReference>
<dbReference type="Gene3D" id="3.20.20.140">
    <property type="entry name" value="Metal-dependent hydrolases"/>
    <property type="match status" value="1"/>
</dbReference>
<dbReference type="Gene3D" id="2.30.40.10">
    <property type="entry name" value="Urease, subunit C, domain 1"/>
    <property type="match status" value="1"/>
</dbReference>
<dbReference type="HAMAP" id="MF_01953">
    <property type="entry name" value="Urease_alpha"/>
    <property type="match status" value="1"/>
</dbReference>
<dbReference type="InterPro" id="IPR006680">
    <property type="entry name" value="Amidohydro-rel"/>
</dbReference>
<dbReference type="InterPro" id="IPR011059">
    <property type="entry name" value="Metal-dep_hydrolase_composite"/>
</dbReference>
<dbReference type="InterPro" id="IPR032466">
    <property type="entry name" value="Metal_Hydrolase"/>
</dbReference>
<dbReference type="InterPro" id="IPR011612">
    <property type="entry name" value="Urease_alpha_N_dom"/>
</dbReference>
<dbReference type="InterPro" id="IPR050112">
    <property type="entry name" value="Urease_alpha_subunit"/>
</dbReference>
<dbReference type="InterPro" id="IPR017950">
    <property type="entry name" value="Urease_AS"/>
</dbReference>
<dbReference type="InterPro" id="IPR005848">
    <property type="entry name" value="Urease_asu"/>
</dbReference>
<dbReference type="InterPro" id="IPR017951">
    <property type="entry name" value="Urease_asu_c"/>
</dbReference>
<dbReference type="InterPro" id="IPR029754">
    <property type="entry name" value="Urease_Ni-bd"/>
</dbReference>
<dbReference type="NCBIfam" id="NF009686">
    <property type="entry name" value="PRK13207.1"/>
    <property type="match status" value="1"/>
</dbReference>
<dbReference type="NCBIfam" id="TIGR01792">
    <property type="entry name" value="urease_alph"/>
    <property type="match status" value="1"/>
</dbReference>
<dbReference type="PANTHER" id="PTHR43440">
    <property type="entry name" value="UREASE"/>
    <property type="match status" value="1"/>
</dbReference>
<dbReference type="PANTHER" id="PTHR43440:SF1">
    <property type="entry name" value="UREASE"/>
    <property type="match status" value="1"/>
</dbReference>
<dbReference type="Pfam" id="PF01979">
    <property type="entry name" value="Amidohydro_1"/>
    <property type="match status" value="1"/>
</dbReference>
<dbReference type="Pfam" id="PF00449">
    <property type="entry name" value="Urease_alpha"/>
    <property type="match status" value="1"/>
</dbReference>
<dbReference type="PRINTS" id="PR01752">
    <property type="entry name" value="UREASE"/>
</dbReference>
<dbReference type="SUPFAM" id="SSF51338">
    <property type="entry name" value="Composite domain of metallo-dependent hydrolases"/>
    <property type="match status" value="2"/>
</dbReference>
<dbReference type="SUPFAM" id="SSF51556">
    <property type="entry name" value="Metallo-dependent hydrolases"/>
    <property type="match status" value="1"/>
</dbReference>
<dbReference type="PROSITE" id="PS01120">
    <property type="entry name" value="UREASE_1"/>
    <property type="match status" value="1"/>
</dbReference>
<dbReference type="PROSITE" id="PS00145">
    <property type="entry name" value="UREASE_2"/>
    <property type="match status" value="1"/>
</dbReference>
<dbReference type="PROSITE" id="PS51368">
    <property type="entry name" value="UREASE_3"/>
    <property type="match status" value="1"/>
</dbReference>
<comment type="catalytic activity">
    <reaction evidence="1">
        <text>urea + 2 H2O + H(+) = hydrogencarbonate + 2 NH4(+)</text>
        <dbReference type="Rhea" id="RHEA:20557"/>
        <dbReference type="ChEBI" id="CHEBI:15377"/>
        <dbReference type="ChEBI" id="CHEBI:15378"/>
        <dbReference type="ChEBI" id="CHEBI:16199"/>
        <dbReference type="ChEBI" id="CHEBI:17544"/>
        <dbReference type="ChEBI" id="CHEBI:28938"/>
        <dbReference type="EC" id="3.5.1.5"/>
    </reaction>
</comment>
<comment type="cofactor">
    <cofactor evidence="1">
        <name>Ni cation</name>
        <dbReference type="ChEBI" id="CHEBI:25516"/>
    </cofactor>
    <text evidence="1">Binds 2 nickel ions per subunit.</text>
</comment>
<comment type="pathway">
    <text evidence="1">Nitrogen metabolism; urea degradation; CO(2) and NH(3) from urea (urease route): step 1/1.</text>
</comment>
<comment type="subunit">
    <text evidence="1">Heterotrimer of UreA (gamma), UreB (beta) and UreC (alpha) subunits. Three heterotrimers associate to form the active enzyme.</text>
</comment>
<comment type="subcellular location">
    <subcellularLocation>
        <location evidence="1">Cytoplasm</location>
    </subcellularLocation>
</comment>
<comment type="PTM">
    <text evidence="1">Carboxylation allows a single lysine to coordinate two nickel ions.</text>
</comment>
<comment type="similarity">
    <text evidence="1">Belongs to the metallo-dependent hydrolases superfamily. Urease alpha subunit family.</text>
</comment>
<protein>
    <recommendedName>
        <fullName evidence="1">Urease subunit alpha</fullName>
        <ecNumber evidence="1">3.5.1.5</ecNumber>
    </recommendedName>
    <alternativeName>
        <fullName evidence="1">Urea amidohydrolase subunit alpha</fullName>
    </alternativeName>
</protein>
<reference key="1">
    <citation type="journal article" date="2007" name="Genome Biol.">
        <title>Characterization and modeling of the Haemophilus influenzae core and supragenomes based on the complete genomic sequences of Rd and 12 clinical nontypeable strains.</title>
        <authorList>
            <person name="Hogg J.S."/>
            <person name="Hu F.Z."/>
            <person name="Janto B."/>
            <person name="Boissy R."/>
            <person name="Hayes J."/>
            <person name="Keefe R."/>
            <person name="Post J.C."/>
            <person name="Ehrlich G.D."/>
        </authorList>
    </citation>
    <scope>NUCLEOTIDE SEQUENCE [LARGE SCALE GENOMIC DNA]</scope>
    <source>
        <strain>PittEE</strain>
    </source>
</reference>